<name>SEPF_LISW6</name>
<feature type="chain" id="PRO_0000334035" description="Cell division protein SepF">
    <location>
        <begin position="1"/>
        <end position="152"/>
    </location>
</feature>
<feature type="region of interest" description="Disordered" evidence="2">
    <location>
        <begin position="23"/>
        <end position="42"/>
    </location>
</feature>
<feature type="compositionally biased region" description="Basic and acidic residues" evidence="2">
    <location>
        <begin position="23"/>
        <end position="32"/>
    </location>
</feature>
<organism>
    <name type="scientific">Listeria welshimeri serovar 6b (strain ATCC 35897 / DSM 20650 / CCUG 15529 / CIP 8149 / NCTC 11857 / SLCC 5334 / V8)</name>
    <dbReference type="NCBI Taxonomy" id="386043"/>
    <lineage>
        <taxon>Bacteria</taxon>
        <taxon>Bacillati</taxon>
        <taxon>Bacillota</taxon>
        <taxon>Bacilli</taxon>
        <taxon>Bacillales</taxon>
        <taxon>Listeriaceae</taxon>
        <taxon>Listeria</taxon>
    </lineage>
</organism>
<keyword id="KW-0131">Cell cycle</keyword>
<keyword id="KW-0132">Cell division</keyword>
<keyword id="KW-0963">Cytoplasm</keyword>
<keyword id="KW-0717">Septation</keyword>
<proteinExistence type="inferred from homology"/>
<reference key="1">
    <citation type="journal article" date="2006" name="J. Bacteriol.">
        <title>Whole-genome sequence of Listeria welshimeri reveals common steps in genome reduction with Listeria innocua as compared to Listeria monocytogenes.</title>
        <authorList>
            <person name="Hain T."/>
            <person name="Steinweg C."/>
            <person name="Kuenne C.T."/>
            <person name="Billion A."/>
            <person name="Ghai R."/>
            <person name="Chatterjee S.S."/>
            <person name="Domann E."/>
            <person name="Kaerst U."/>
            <person name="Goesmann A."/>
            <person name="Bekel T."/>
            <person name="Bartels D."/>
            <person name="Kaiser O."/>
            <person name="Meyer F."/>
            <person name="Puehler A."/>
            <person name="Weisshaar B."/>
            <person name="Wehland J."/>
            <person name="Liang C."/>
            <person name="Dandekar T."/>
            <person name="Lampidis R."/>
            <person name="Kreft J."/>
            <person name="Goebel W."/>
            <person name="Chakraborty T."/>
        </authorList>
    </citation>
    <scope>NUCLEOTIDE SEQUENCE [LARGE SCALE GENOMIC DNA]</scope>
    <source>
        <strain>ATCC 35897 / DSM 20650 / CCUG 15529 / CIP 8149 / NCTC 11857 / SLCC 5334 / V8</strain>
    </source>
</reference>
<evidence type="ECO:0000255" key="1">
    <source>
        <dbReference type="HAMAP-Rule" id="MF_01197"/>
    </source>
</evidence>
<evidence type="ECO:0000256" key="2">
    <source>
        <dbReference type="SAM" id="MobiDB-lite"/>
    </source>
</evidence>
<protein>
    <recommendedName>
        <fullName evidence="1">Cell division protein SepF</fullName>
    </recommendedName>
</protein>
<accession>A0AKD0</accession>
<gene>
    <name evidence="1" type="primary">sepF</name>
    <name type="ordered locus">lwe2044</name>
</gene>
<dbReference type="EMBL" id="AM263198">
    <property type="protein sequence ID" value="CAK21462.1"/>
    <property type="molecule type" value="Genomic_DNA"/>
</dbReference>
<dbReference type="RefSeq" id="WP_011702807.1">
    <property type="nucleotide sequence ID" value="NC_008555.1"/>
</dbReference>
<dbReference type="SMR" id="A0AKD0"/>
<dbReference type="STRING" id="386043.lwe2044"/>
<dbReference type="GeneID" id="61189944"/>
<dbReference type="KEGG" id="lwe:lwe2044"/>
<dbReference type="eggNOG" id="COG1799">
    <property type="taxonomic scope" value="Bacteria"/>
</dbReference>
<dbReference type="HOGENOM" id="CLU_078499_4_1_9"/>
<dbReference type="OrthoDB" id="9815206at2"/>
<dbReference type="Proteomes" id="UP000000779">
    <property type="component" value="Chromosome"/>
</dbReference>
<dbReference type="GO" id="GO:0005737">
    <property type="term" value="C:cytoplasm"/>
    <property type="evidence" value="ECO:0007669"/>
    <property type="project" value="UniProtKB-SubCell"/>
</dbReference>
<dbReference type="GO" id="GO:0000917">
    <property type="term" value="P:division septum assembly"/>
    <property type="evidence" value="ECO:0007669"/>
    <property type="project" value="UniProtKB-KW"/>
</dbReference>
<dbReference type="GO" id="GO:0043093">
    <property type="term" value="P:FtsZ-dependent cytokinesis"/>
    <property type="evidence" value="ECO:0007669"/>
    <property type="project" value="UniProtKB-UniRule"/>
</dbReference>
<dbReference type="Gene3D" id="3.30.110.150">
    <property type="entry name" value="SepF-like protein"/>
    <property type="match status" value="1"/>
</dbReference>
<dbReference type="HAMAP" id="MF_01197">
    <property type="entry name" value="SepF"/>
    <property type="match status" value="1"/>
</dbReference>
<dbReference type="InterPro" id="IPR023052">
    <property type="entry name" value="Cell_div_SepF"/>
</dbReference>
<dbReference type="InterPro" id="IPR007561">
    <property type="entry name" value="Cell_div_SepF/SepF-rel"/>
</dbReference>
<dbReference type="InterPro" id="IPR038594">
    <property type="entry name" value="SepF-like_sf"/>
</dbReference>
<dbReference type="PANTHER" id="PTHR35798">
    <property type="entry name" value="CELL DIVISION PROTEIN SEPF"/>
    <property type="match status" value="1"/>
</dbReference>
<dbReference type="PANTHER" id="PTHR35798:SF1">
    <property type="entry name" value="CELL DIVISION PROTEIN SEPF"/>
    <property type="match status" value="1"/>
</dbReference>
<dbReference type="Pfam" id="PF04472">
    <property type="entry name" value="SepF"/>
    <property type="match status" value="1"/>
</dbReference>
<comment type="function">
    <text evidence="1">Cell division protein that is part of the divisome complex and is recruited early to the Z-ring. Probably stimulates Z-ring formation, perhaps through the cross-linking of FtsZ protofilaments. Its function overlaps with FtsA.</text>
</comment>
<comment type="subunit">
    <text evidence="1">Homodimer. Interacts with FtsZ.</text>
</comment>
<comment type="subcellular location">
    <subcellularLocation>
        <location evidence="1">Cytoplasm</location>
    </subcellularLocation>
    <text evidence="1">Localizes to the division site, in a FtsZ-dependent manner.</text>
</comment>
<comment type="similarity">
    <text evidence="1">Belongs to the SepF family.</text>
</comment>
<sequence>MGLSNKFKSFFFLDEEEEYYEEEVAREPEPMQKKTKKEKPSKNRFYAVEEEDAKVVSMQGAQYSSRMVLAEPRVYAEAQELADYLKDYKTVVVNLQRISHDQATRIVDFLSGTVYALGGDIQRVGNNIFLCTPDNVEVNGSISEMLDEQNFM</sequence>